<dbReference type="EMBL" id="AY205119">
    <property type="protein sequence ID" value="AAP30993.1"/>
    <property type="molecule type" value="Genomic_DNA"/>
</dbReference>
<dbReference type="GlyCosmos" id="Q864H8">
    <property type="glycosylation" value="1 site, No reported glycans"/>
</dbReference>
<dbReference type="GO" id="GO:0005886">
    <property type="term" value="C:plasma membrane"/>
    <property type="evidence" value="ECO:0000250"/>
    <property type="project" value="UniProtKB"/>
</dbReference>
<dbReference type="GO" id="GO:0004980">
    <property type="term" value="F:melanocyte-stimulating hormone receptor activity"/>
    <property type="evidence" value="ECO:0007669"/>
    <property type="project" value="InterPro"/>
</dbReference>
<dbReference type="GO" id="GO:0007189">
    <property type="term" value="P:adenylate cyclase-activating G protein-coupled receptor signaling pathway"/>
    <property type="evidence" value="ECO:0007669"/>
    <property type="project" value="UniProtKB-ARBA"/>
</dbReference>
<dbReference type="CDD" id="cd15351">
    <property type="entry name" value="7tmA_MC1R"/>
    <property type="match status" value="1"/>
</dbReference>
<dbReference type="FunFam" id="1.20.1070.10:FF:000211">
    <property type="entry name" value="Melanocyte-stimulating hormone receptor"/>
    <property type="match status" value="1"/>
</dbReference>
<dbReference type="Gene3D" id="1.20.1070.10">
    <property type="entry name" value="Rhodopsin 7-helix transmembrane proteins"/>
    <property type="match status" value="1"/>
</dbReference>
<dbReference type="InterPro" id="IPR000276">
    <property type="entry name" value="GPCR_Rhodpsn"/>
</dbReference>
<dbReference type="InterPro" id="IPR017452">
    <property type="entry name" value="GPCR_Rhodpsn_7TM"/>
</dbReference>
<dbReference type="InterPro" id="IPR001671">
    <property type="entry name" value="Melcrt_ACTH_rcpt"/>
</dbReference>
<dbReference type="InterPro" id="IPR000761">
    <property type="entry name" value="MSH_rcpt"/>
</dbReference>
<dbReference type="PANTHER" id="PTHR22750">
    <property type="entry name" value="G-PROTEIN COUPLED RECEPTOR"/>
    <property type="match status" value="1"/>
</dbReference>
<dbReference type="Pfam" id="PF00001">
    <property type="entry name" value="7tm_1"/>
    <property type="match status" value="1"/>
</dbReference>
<dbReference type="PRINTS" id="PR00237">
    <property type="entry name" value="GPCRRHODOPSN"/>
</dbReference>
<dbReference type="PRINTS" id="PR00534">
    <property type="entry name" value="MCRFAMILY"/>
</dbReference>
<dbReference type="PRINTS" id="PR00536">
    <property type="entry name" value="MELNOCYTESHR"/>
</dbReference>
<dbReference type="SMART" id="SM01381">
    <property type="entry name" value="7TM_GPCR_Srsx"/>
    <property type="match status" value="1"/>
</dbReference>
<dbReference type="SUPFAM" id="SSF81321">
    <property type="entry name" value="Family A G protein-coupled receptor-like"/>
    <property type="match status" value="1"/>
</dbReference>
<dbReference type="PROSITE" id="PS00237">
    <property type="entry name" value="G_PROTEIN_RECEP_F1_1"/>
    <property type="match status" value="1"/>
</dbReference>
<dbReference type="PROSITE" id="PS50262">
    <property type="entry name" value="G_PROTEIN_RECEP_F1_2"/>
    <property type="match status" value="1"/>
</dbReference>
<proteinExistence type="inferred from homology"/>
<organism>
    <name type="scientific">Callithrix geoffroyi</name>
    <name type="common">Geoffroy's marmoset</name>
    <dbReference type="NCBI Taxonomy" id="52231"/>
    <lineage>
        <taxon>Eukaryota</taxon>
        <taxon>Metazoa</taxon>
        <taxon>Chordata</taxon>
        <taxon>Craniata</taxon>
        <taxon>Vertebrata</taxon>
        <taxon>Euteleostomi</taxon>
        <taxon>Mammalia</taxon>
        <taxon>Eutheria</taxon>
        <taxon>Euarchontoglires</taxon>
        <taxon>Primates</taxon>
        <taxon>Haplorrhini</taxon>
        <taxon>Platyrrhini</taxon>
        <taxon>Cebidae</taxon>
        <taxon>Callitrichinae</taxon>
        <taxon>Callithrix</taxon>
        <taxon>Callithrix</taxon>
    </lineage>
</organism>
<evidence type="ECO:0000250" key="1">
    <source>
        <dbReference type="UniProtKB" id="Q01726"/>
    </source>
</evidence>
<evidence type="ECO:0000255" key="2"/>
<evidence type="ECO:0000255" key="3">
    <source>
        <dbReference type="PROSITE-ProRule" id="PRU00521"/>
    </source>
</evidence>
<name>MSHR_CALGE</name>
<protein>
    <recommendedName>
        <fullName>Melanocyte-stimulating hormone receptor</fullName>
        <shortName>MSH-R</shortName>
    </recommendedName>
    <alternativeName>
        <fullName>Melanocortin receptor 1</fullName>
        <shortName>MC1-R</shortName>
    </alternativeName>
</protein>
<feature type="chain" id="PRO_0000069795" description="Melanocyte-stimulating hormone receptor">
    <location>
        <begin position="1"/>
        <end position="344"/>
    </location>
</feature>
<feature type="topological domain" description="Extracellular" evidence="2">
    <location>
        <begin position="1"/>
        <end position="37"/>
    </location>
</feature>
<feature type="transmembrane region" description="Helical; Name=1" evidence="2">
    <location>
        <begin position="38"/>
        <end position="63"/>
    </location>
</feature>
<feature type="topological domain" description="Cytoplasmic" evidence="2">
    <location>
        <begin position="64"/>
        <end position="72"/>
    </location>
</feature>
<feature type="transmembrane region" description="Helical; Name=2" evidence="2">
    <location>
        <begin position="73"/>
        <end position="93"/>
    </location>
</feature>
<feature type="topological domain" description="Extracellular" evidence="2">
    <location>
        <begin position="94"/>
        <end position="118"/>
    </location>
</feature>
<feature type="transmembrane region" description="Helical; Name=3" evidence="2">
    <location>
        <begin position="119"/>
        <end position="140"/>
    </location>
</feature>
<feature type="topological domain" description="Cytoplasmic" evidence="2">
    <location>
        <begin position="141"/>
        <end position="163"/>
    </location>
</feature>
<feature type="transmembrane region" description="Helical; Name=4" evidence="2">
    <location>
        <begin position="164"/>
        <end position="183"/>
    </location>
</feature>
<feature type="topological domain" description="Extracellular" evidence="2">
    <location>
        <begin position="184"/>
        <end position="191"/>
    </location>
</feature>
<feature type="transmembrane region" description="Helical; Name=5" evidence="2">
    <location>
        <begin position="192"/>
        <end position="211"/>
    </location>
</feature>
<feature type="topological domain" description="Cytoplasmic" evidence="2">
    <location>
        <begin position="212"/>
        <end position="240"/>
    </location>
</feature>
<feature type="transmembrane region" description="Helical; Name=6" evidence="2">
    <location>
        <begin position="241"/>
        <end position="266"/>
    </location>
</feature>
<feature type="topological domain" description="Extracellular" evidence="2">
    <location>
        <begin position="267"/>
        <end position="279"/>
    </location>
</feature>
<feature type="transmembrane region" description="Helical; Name=7" evidence="2">
    <location>
        <begin position="280"/>
        <end position="300"/>
    </location>
</feature>
<feature type="topological domain" description="Cytoplasmic" evidence="2">
    <location>
        <begin position="301"/>
        <end position="344"/>
    </location>
</feature>
<feature type="lipid moiety-binding region" description="S-palmitoyl cysteine" evidence="2">
    <location>
        <position position="315"/>
    </location>
</feature>
<feature type="glycosylation site" description="N-linked (GlcNAc...) asparagine" evidence="2">
    <location>
        <position position="29"/>
    </location>
</feature>
<keyword id="KW-1003">Cell membrane</keyword>
<keyword id="KW-0297">G-protein coupled receptor</keyword>
<keyword id="KW-0325">Glycoprotein</keyword>
<keyword id="KW-0449">Lipoprotein</keyword>
<keyword id="KW-0472">Membrane</keyword>
<keyword id="KW-0564">Palmitate</keyword>
<keyword id="KW-0675">Receptor</keyword>
<keyword id="KW-0807">Transducer</keyword>
<keyword id="KW-0812">Transmembrane</keyword>
<keyword id="KW-1133">Transmembrane helix</keyword>
<reference key="1">
    <citation type="journal article" date="2003" name="Am. J. Phys. Anthropol.">
        <title>Evolution of a pigmentation gene, the melanocortin-1 receptor, in primates.</title>
        <authorList>
            <person name="Mundy N.I."/>
            <person name="Kelly J."/>
        </authorList>
    </citation>
    <scope>NUCLEOTIDE SEQUENCE [GENOMIC DNA]</scope>
    <source>
        <strain>Isolate 27</strain>
    </source>
</reference>
<gene>
    <name type="primary">MC1R</name>
</gene>
<sequence>MPMQGAQRKLLGSLNSTPTATSNPGLAANHTGAPCLEVSIPDGLFLSLGLVSLVENVLVVAAIAKNRNLHSSMYXFICCLALSDLLVSGSNMLETAIILLLEAGTLATRASVVQQLHNTIDVLTCSSMLCSLCFLGAIAVDRYISIFYALRYHSIMTLPRAQRAIAAIWVASVLSSTLFITYYDHAAVLLCLVVFFLAMLVLMAVLYVHMLARACQHAQGIIRLHNRQLPAHKGFGLRGAATLTILLGIFFLCWGPFFLHLTLVVFCPQHLTCNCIFKNFKVFLTLIICNTIIDPLIYAFRSQELRRTLKEVLLCSSWPGCWAEGGGDSVWPGSCVTLRGPLPP</sequence>
<accession>Q864H8</accession>
<comment type="function">
    <text evidence="1">Receptor for MSH (alpha, beta and gamma) and ACTH. The activity of this receptor is mediated by G proteins which activate adenylate cyclase. Mediates melanogenesis, the production of eumelanin (black/brown) and phaeomelanin (red/yellow), via regulation of cAMP signaling in melanocytes.</text>
</comment>
<comment type="subunit">
    <text evidence="1">Interacts with MGRN1, but does not undergo MGRN1-mediated ubiquitination; this interaction competes with GNAS-binding and thus inhibits agonist-induced cAMP production. Interacts with OPN3; the interaction results in a decrease in MC1R-mediated cAMP signaling and ultimately a decrease in melanin production in melanocytes.</text>
</comment>
<comment type="subcellular location">
    <subcellularLocation>
        <location evidence="1">Cell membrane</location>
        <topology evidence="2">Multi-pass membrane protein</topology>
    </subcellularLocation>
</comment>
<comment type="similarity">
    <text evidence="3">Belongs to the G-protein coupled receptor 1 family.</text>
</comment>